<feature type="chain" id="PRO_0000070322" description="UPF0227 protein YcfP">
    <location>
        <begin position="1"/>
        <end position="180"/>
    </location>
</feature>
<proteinExistence type="inferred from homology"/>
<organism>
    <name type="scientific">Salmonella typhimurium (strain LT2 / SGSC1412 / ATCC 700720)</name>
    <dbReference type="NCBI Taxonomy" id="99287"/>
    <lineage>
        <taxon>Bacteria</taxon>
        <taxon>Pseudomonadati</taxon>
        <taxon>Pseudomonadota</taxon>
        <taxon>Gammaproteobacteria</taxon>
        <taxon>Enterobacterales</taxon>
        <taxon>Enterobacteriaceae</taxon>
        <taxon>Salmonella</taxon>
    </lineage>
</organism>
<protein>
    <recommendedName>
        <fullName evidence="1">UPF0227 protein YcfP</fullName>
    </recommendedName>
</protein>
<dbReference type="EMBL" id="AE006468">
    <property type="protein sequence ID" value="AAL20139.1"/>
    <property type="molecule type" value="Genomic_DNA"/>
</dbReference>
<dbReference type="RefSeq" id="NP_460180.1">
    <property type="nucleotide sequence ID" value="NC_003197.2"/>
</dbReference>
<dbReference type="RefSeq" id="WP_000587943.1">
    <property type="nucleotide sequence ID" value="NC_003197.2"/>
</dbReference>
<dbReference type="SMR" id="P67366"/>
<dbReference type="STRING" id="99287.STM1210"/>
<dbReference type="ESTHER" id="salty-ycfp">
    <property type="family name" value="abh_upf00227"/>
</dbReference>
<dbReference type="PaxDb" id="99287-STM1210"/>
<dbReference type="GeneID" id="1252728"/>
<dbReference type="KEGG" id="stm:STM1210"/>
<dbReference type="PATRIC" id="fig|99287.12.peg.1279"/>
<dbReference type="HOGENOM" id="CLU_128769_0_0_6"/>
<dbReference type="OMA" id="KCVSEFR"/>
<dbReference type="PhylomeDB" id="P67366"/>
<dbReference type="BioCyc" id="SENT99287:STM1210-MONOMER"/>
<dbReference type="Proteomes" id="UP000001014">
    <property type="component" value="Chromosome"/>
</dbReference>
<dbReference type="GO" id="GO:0005829">
    <property type="term" value="C:cytosol"/>
    <property type="evidence" value="ECO:0000318"/>
    <property type="project" value="GO_Central"/>
</dbReference>
<dbReference type="GO" id="GO:0016788">
    <property type="term" value="F:hydrolase activity, acting on ester bonds"/>
    <property type="evidence" value="ECO:0000318"/>
    <property type="project" value="GO_Central"/>
</dbReference>
<dbReference type="FunFam" id="3.40.50.1820:FF:000007">
    <property type="entry name" value="UPF0227 protein YcfP"/>
    <property type="match status" value="1"/>
</dbReference>
<dbReference type="Gene3D" id="3.40.50.1820">
    <property type="entry name" value="alpha/beta hydrolase"/>
    <property type="match status" value="1"/>
</dbReference>
<dbReference type="HAMAP" id="MF_01047">
    <property type="entry name" value="UPF0227"/>
    <property type="match status" value="1"/>
</dbReference>
<dbReference type="InterPro" id="IPR029058">
    <property type="entry name" value="AB_hydrolase_fold"/>
</dbReference>
<dbReference type="InterPro" id="IPR022987">
    <property type="entry name" value="UPF0227"/>
</dbReference>
<dbReference type="InterPro" id="IPR008886">
    <property type="entry name" value="UPF0227/Esterase_YqiA"/>
</dbReference>
<dbReference type="NCBIfam" id="NF003431">
    <property type="entry name" value="PRK04940.1"/>
    <property type="match status" value="1"/>
</dbReference>
<dbReference type="PANTHER" id="PTHR35602">
    <property type="entry name" value="ESTERASE YQIA-RELATED"/>
    <property type="match status" value="1"/>
</dbReference>
<dbReference type="PANTHER" id="PTHR35602:SF2">
    <property type="entry name" value="UPF0227 PROTEIN YCFP"/>
    <property type="match status" value="1"/>
</dbReference>
<dbReference type="Pfam" id="PF05728">
    <property type="entry name" value="UPF0227"/>
    <property type="match status" value="1"/>
</dbReference>
<dbReference type="SUPFAM" id="SSF53474">
    <property type="entry name" value="alpha/beta-Hydrolases"/>
    <property type="match status" value="1"/>
</dbReference>
<accession>P67366</accession>
<accession>Q8XGQ0</accession>
<name>YCFP_SALTY</name>
<gene>
    <name evidence="1" type="primary">ycfP</name>
    <name type="ordered locus">STM1210</name>
</gene>
<sequence length="180" mass="21077">MIIYLHGFDSNSPGNHEKVLQLQFIDPDVRLVSYSTRHPKHDMQHLLKEVDKMLQLNVDERPLICGVGLGGYWAERIGFLCDIRQVVFNPNLFPYENMEGKIDRPEEYADIATKCVTNFREKNRDRCLVILSRHDEALDSQRSAQALHPFYEIVWDEEQTHKFKNISPHLQRIKAFKTLG</sequence>
<comment type="similarity">
    <text evidence="1">Belongs to the UPF0227 family.</text>
</comment>
<keyword id="KW-1185">Reference proteome</keyword>
<reference key="1">
    <citation type="journal article" date="2001" name="Nature">
        <title>Complete genome sequence of Salmonella enterica serovar Typhimurium LT2.</title>
        <authorList>
            <person name="McClelland M."/>
            <person name="Sanderson K.E."/>
            <person name="Spieth J."/>
            <person name="Clifton S.W."/>
            <person name="Latreille P."/>
            <person name="Courtney L."/>
            <person name="Porwollik S."/>
            <person name="Ali J."/>
            <person name="Dante M."/>
            <person name="Du F."/>
            <person name="Hou S."/>
            <person name="Layman D."/>
            <person name="Leonard S."/>
            <person name="Nguyen C."/>
            <person name="Scott K."/>
            <person name="Holmes A."/>
            <person name="Grewal N."/>
            <person name="Mulvaney E."/>
            <person name="Ryan E."/>
            <person name="Sun H."/>
            <person name="Florea L."/>
            <person name="Miller W."/>
            <person name="Stoneking T."/>
            <person name="Nhan M."/>
            <person name="Waterston R."/>
            <person name="Wilson R.K."/>
        </authorList>
    </citation>
    <scope>NUCLEOTIDE SEQUENCE [LARGE SCALE GENOMIC DNA]</scope>
    <source>
        <strain>LT2 / SGSC1412 / ATCC 700720</strain>
    </source>
</reference>
<evidence type="ECO:0000255" key="1">
    <source>
        <dbReference type="HAMAP-Rule" id="MF_01047"/>
    </source>
</evidence>